<protein>
    <recommendedName>
        <fullName evidence="2">DNA polymerase sliding clamp 1</fullName>
    </recommendedName>
    <alternativeName>
        <fullName evidence="2">Proliferating cell nuclear antigen homolog 1</fullName>
        <shortName evidence="2">PCNA1</shortName>
    </alternativeName>
</protein>
<feature type="chain" id="PRO_0000149217" description="DNA polymerase sliding clamp 1">
    <location>
        <begin position="1"/>
        <end position="245"/>
    </location>
</feature>
<feature type="strand" evidence="4">
    <location>
        <begin position="2"/>
        <end position="6"/>
    </location>
</feature>
<feature type="helix" evidence="4">
    <location>
        <begin position="8"/>
        <end position="21"/>
    </location>
</feature>
<feature type="strand" evidence="4">
    <location>
        <begin position="23"/>
        <end position="30"/>
    </location>
</feature>
<feature type="strand" evidence="4">
    <location>
        <begin position="33"/>
        <end position="39"/>
    </location>
</feature>
<feature type="strand" evidence="4">
    <location>
        <begin position="43"/>
        <end position="52"/>
    </location>
</feature>
<feature type="helix" evidence="4">
    <location>
        <begin position="53"/>
        <end position="55"/>
    </location>
</feature>
<feature type="strand" evidence="4">
    <location>
        <begin position="56"/>
        <end position="60"/>
    </location>
</feature>
<feature type="strand" evidence="4">
    <location>
        <begin position="65"/>
        <end position="70"/>
    </location>
</feature>
<feature type="helix" evidence="4">
    <location>
        <begin position="71"/>
        <end position="78"/>
    </location>
</feature>
<feature type="strand" evidence="4">
    <location>
        <begin position="87"/>
        <end position="93"/>
    </location>
</feature>
<feature type="strand" evidence="4">
    <location>
        <begin position="96"/>
        <end position="101"/>
    </location>
</feature>
<feature type="strand" evidence="4">
    <location>
        <begin position="103"/>
        <end position="105"/>
    </location>
</feature>
<feature type="strand" evidence="4">
    <location>
        <begin position="107"/>
        <end position="112"/>
    </location>
</feature>
<feature type="strand" evidence="4">
    <location>
        <begin position="129"/>
        <end position="135"/>
    </location>
</feature>
<feature type="helix" evidence="4">
    <location>
        <begin position="136"/>
        <end position="149"/>
    </location>
</feature>
<feature type="strand" evidence="4">
    <location>
        <begin position="151"/>
        <end position="157"/>
    </location>
</feature>
<feature type="strand" evidence="4">
    <location>
        <begin position="159"/>
        <end position="170"/>
    </location>
</feature>
<feature type="strand" evidence="4">
    <location>
        <begin position="174"/>
        <end position="177"/>
    </location>
</feature>
<feature type="helix" evidence="4">
    <location>
        <begin position="178"/>
        <end position="180"/>
    </location>
</feature>
<feature type="strand" evidence="4">
    <location>
        <begin position="183"/>
        <end position="190"/>
    </location>
</feature>
<feature type="strand" evidence="4">
    <location>
        <begin position="192"/>
        <end position="197"/>
    </location>
</feature>
<feature type="helix" evidence="4">
    <location>
        <begin position="198"/>
        <end position="203"/>
    </location>
</feature>
<feature type="helix" evidence="4">
    <location>
        <begin position="204"/>
        <end position="210"/>
    </location>
</feature>
<feature type="strand" evidence="4">
    <location>
        <begin position="212"/>
        <end position="218"/>
    </location>
</feature>
<feature type="strand" evidence="4">
    <location>
        <begin position="224"/>
        <end position="229"/>
    </location>
</feature>
<feature type="helix" evidence="4">
    <location>
        <begin position="231"/>
        <end position="233"/>
    </location>
</feature>
<feature type="strand" evidence="4">
    <location>
        <begin position="235"/>
        <end position="240"/>
    </location>
</feature>
<sequence length="245" mass="27284">MHIVYDDVRDLKAIIQALLKLVDEALFDIKPEGIQLVAIDKAHISLIKIELPKEMFKEYDVPEEFKFGFNTQYMSKLLKAAKRKEEIIIDADSPEVVKLTLSGALNRVFNVNNIEVLPPEVPEVNLEFDIKATINASGLKNAIGEIAEVADTLLISGNEEKVVVKGEGENKVEVEFSKDTGSLADIEFNKESSSAYDVEYLNDIISLTKLSDYVKVAFADQKPMQLEFNMEGGGKVTYLLAPKLS</sequence>
<reference key="1">
    <citation type="journal article" date="2001" name="DNA Res.">
        <title>Complete genome sequence of an aerobic thermoacidophilic Crenarchaeon, Sulfolobus tokodaii strain7.</title>
        <authorList>
            <person name="Kawarabayasi Y."/>
            <person name="Hino Y."/>
            <person name="Horikawa H."/>
            <person name="Jin-no K."/>
            <person name="Takahashi M."/>
            <person name="Sekine M."/>
            <person name="Baba S."/>
            <person name="Ankai A."/>
            <person name="Kosugi H."/>
            <person name="Hosoyama A."/>
            <person name="Fukui S."/>
            <person name="Nagai Y."/>
            <person name="Nishijima K."/>
            <person name="Otsuka R."/>
            <person name="Nakazawa H."/>
            <person name="Takamiya M."/>
            <person name="Kato Y."/>
            <person name="Yoshizawa T."/>
            <person name="Tanaka T."/>
            <person name="Kudoh Y."/>
            <person name="Yamazaki J."/>
            <person name="Kushida N."/>
            <person name="Oguchi A."/>
            <person name="Aoki K."/>
            <person name="Masuda S."/>
            <person name="Yanagii M."/>
            <person name="Nishimura M."/>
            <person name="Yamagishi A."/>
            <person name="Oshima T."/>
            <person name="Kikuchi H."/>
        </authorList>
    </citation>
    <scope>NUCLEOTIDE SEQUENCE [LARGE SCALE GENOMIC DNA]</scope>
    <source>
        <strain>DSM 16993 / JCM 10545 / NBRC 100140 / 7</strain>
    </source>
</reference>
<reference key="2">
    <citation type="journal article" date="2008" name="Biochem. Biophys. Res. Commun.">
        <title>Spatial subunit distribution and in vitro functions of the novel trimeric PCNA complex from Sulfolobus tokodaii.</title>
        <authorList>
            <person name="Lu S."/>
            <person name="Li Z."/>
            <person name="Wang Z."/>
            <person name="Ma X."/>
            <person name="Sheng D."/>
            <person name="Ni J."/>
            <person name="Shen Y."/>
        </authorList>
    </citation>
    <scope>FUNCTION</scope>
    <scope>INTERACTION WITH PCNA3</scope>
    <scope>SUBUNIT</scope>
    <source>
        <strain>DSM 16993 / JCM 10545 / NBRC 100140 / 7</strain>
    </source>
</reference>
<reference key="3">
    <citation type="submission" date="2011-07" db="PDB data bank">
        <title>Crystal structure of proliferating cell nuclear antigen (PCNA) homolog from Sulfolobus tokodaii.</title>
        <authorList>
            <person name="Tanabe E."/>
            <person name="Yasutake Y."/>
            <person name="Tanaka Y."/>
            <person name="Yao M."/>
            <person name="Tsumoto K."/>
            <person name="Kumagai I."/>
            <person name="Tanaka I."/>
        </authorList>
    </citation>
    <scope>X-RAY CRYSTALLOGRAPHY (1.68 ANGSTROMS)</scope>
</reference>
<evidence type="ECO:0000250" key="1"/>
<evidence type="ECO:0000255" key="2">
    <source>
        <dbReference type="HAMAP-Rule" id="MF_00317"/>
    </source>
</evidence>
<evidence type="ECO:0000269" key="3">
    <source>
    </source>
</evidence>
<evidence type="ECO:0007829" key="4">
    <source>
        <dbReference type="PDB" id="1UD9"/>
    </source>
</evidence>
<gene>
    <name evidence="2" type="primary">pcn1</name>
    <name type="synonym">pcnA</name>
    <name type="ordered locus">STK_03870</name>
</gene>
<dbReference type="EMBL" id="BA000023">
    <property type="protein sequence ID" value="BAK54261.1"/>
    <property type="molecule type" value="Genomic_DNA"/>
</dbReference>
<dbReference type="RefSeq" id="WP_010978351.1">
    <property type="nucleotide sequence ID" value="NC_003106.2"/>
</dbReference>
<dbReference type="PDB" id="1UD9">
    <property type="method" value="X-ray"/>
    <property type="resolution" value="1.68 A"/>
    <property type="chains" value="A/B/C/D=2-245"/>
</dbReference>
<dbReference type="PDBsum" id="1UD9"/>
<dbReference type="SMR" id="Q975N2"/>
<dbReference type="STRING" id="273063.STK_03870"/>
<dbReference type="GeneID" id="1458312"/>
<dbReference type="KEGG" id="sto:STK_03870"/>
<dbReference type="PATRIC" id="fig|273063.9.peg.448"/>
<dbReference type="eggNOG" id="arCOG00488">
    <property type="taxonomic scope" value="Archaea"/>
</dbReference>
<dbReference type="OrthoDB" id="14749at2157"/>
<dbReference type="EvolutionaryTrace" id="Q975N2"/>
<dbReference type="Proteomes" id="UP000001015">
    <property type="component" value="Chromosome"/>
</dbReference>
<dbReference type="GO" id="GO:0003677">
    <property type="term" value="F:DNA binding"/>
    <property type="evidence" value="ECO:0007669"/>
    <property type="project" value="UniProtKB-UniRule"/>
</dbReference>
<dbReference type="GO" id="GO:0030337">
    <property type="term" value="F:DNA polymerase processivity factor activity"/>
    <property type="evidence" value="ECO:0007669"/>
    <property type="project" value="UniProtKB-UniRule"/>
</dbReference>
<dbReference type="GO" id="GO:0006272">
    <property type="term" value="P:leading strand elongation"/>
    <property type="evidence" value="ECO:0007669"/>
    <property type="project" value="TreeGrafter"/>
</dbReference>
<dbReference type="GO" id="GO:0006275">
    <property type="term" value="P:regulation of DNA replication"/>
    <property type="evidence" value="ECO:0007669"/>
    <property type="project" value="UniProtKB-UniRule"/>
</dbReference>
<dbReference type="CDD" id="cd00577">
    <property type="entry name" value="PCNA"/>
    <property type="match status" value="1"/>
</dbReference>
<dbReference type="Gene3D" id="3.70.10.10">
    <property type="match status" value="1"/>
</dbReference>
<dbReference type="HAMAP" id="MF_00317">
    <property type="entry name" value="DNApol_clamp_arch"/>
    <property type="match status" value="1"/>
</dbReference>
<dbReference type="InterPro" id="IPR046938">
    <property type="entry name" value="DNA_clamp_sf"/>
</dbReference>
<dbReference type="InterPro" id="IPR000730">
    <property type="entry name" value="Pr_cel_nuc_antig"/>
</dbReference>
<dbReference type="InterPro" id="IPR022649">
    <property type="entry name" value="Pr_cel_nuc_antig_C"/>
</dbReference>
<dbReference type="InterPro" id="IPR022659">
    <property type="entry name" value="Pr_cel_nuc_antig_CS"/>
</dbReference>
<dbReference type="InterPro" id="IPR022648">
    <property type="entry name" value="Pr_cel_nuc_antig_N"/>
</dbReference>
<dbReference type="NCBIfam" id="TIGR00590">
    <property type="entry name" value="pcna"/>
    <property type="match status" value="1"/>
</dbReference>
<dbReference type="NCBIfam" id="NF002220">
    <property type="entry name" value="PRK01115.1-3"/>
    <property type="match status" value="1"/>
</dbReference>
<dbReference type="PANTHER" id="PTHR11352">
    <property type="entry name" value="PROLIFERATING CELL NUCLEAR ANTIGEN"/>
    <property type="match status" value="1"/>
</dbReference>
<dbReference type="PANTHER" id="PTHR11352:SF0">
    <property type="entry name" value="PROLIFERATING CELL NUCLEAR ANTIGEN"/>
    <property type="match status" value="1"/>
</dbReference>
<dbReference type="Pfam" id="PF02747">
    <property type="entry name" value="PCNA_C"/>
    <property type="match status" value="1"/>
</dbReference>
<dbReference type="Pfam" id="PF00705">
    <property type="entry name" value="PCNA_N"/>
    <property type="match status" value="1"/>
</dbReference>
<dbReference type="PRINTS" id="PR00339">
    <property type="entry name" value="PCNACYCLIN"/>
</dbReference>
<dbReference type="SUPFAM" id="SSF55979">
    <property type="entry name" value="DNA clamp"/>
    <property type="match status" value="2"/>
</dbReference>
<dbReference type="PROSITE" id="PS01251">
    <property type="entry name" value="PCNA_1"/>
    <property type="match status" value="1"/>
</dbReference>
<comment type="function">
    <text evidence="2 3">Sliding clamp subunit that acts as a moving platform for DNA processing. Responsible for tethering the catalytic subunit of DNA polymerase and other proteins to DNA during high-speed replication (By similarity). The trimeric complex inhibits DNA ligase and both 3'-5' and 5'-3' activity of Hel308 (Hjm) helicase, but stimulates Hjc, the Holliday junction cleavage enzyme.</text>
</comment>
<comment type="subunit">
    <text evidence="1 3">The subunits circularize to form a toroid; DNA passes through its center. Replication factor C (RFC) is required to load the toroid on the DNA (By similarity). Forms a dimeric complex with PCNA3 and a trimeric complex with PCNA2 and PCNA3; does not form homotrimers (PubMed:18782564).</text>
</comment>
<comment type="similarity">
    <text evidence="2">Belongs to the PCNA family.</text>
</comment>
<accession>Q975N2</accession>
<accession>F9VMW4</accession>
<proteinExistence type="evidence at protein level"/>
<keyword id="KW-0002">3D-structure</keyword>
<keyword id="KW-0235">DNA replication</keyword>
<keyword id="KW-0238">DNA-binding</keyword>
<keyword id="KW-1185">Reference proteome</keyword>
<name>PCNA1_SULTO</name>
<organism>
    <name type="scientific">Sulfurisphaera tokodaii (strain DSM 16993 / JCM 10545 / NBRC 100140 / 7)</name>
    <name type="common">Sulfolobus tokodaii</name>
    <dbReference type="NCBI Taxonomy" id="273063"/>
    <lineage>
        <taxon>Archaea</taxon>
        <taxon>Thermoproteota</taxon>
        <taxon>Thermoprotei</taxon>
        <taxon>Sulfolobales</taxon>
        <taxon>Sulfolobaceae</taxon>
        <taxon>Sulfurisphaera</taxon>
    </lineage>
</organism>